<feature type="chain" id="PRO_0000056182" description="E3 ubiquitin-protein ligase SINAT3">
    <location>
        <begin position="1"/>
        <end position="326"/>
    </location>
</feature>
<feature type="zinc finger region" description="RING-type" evidence="3">
    <location>
        <begin position="63"/>
        <end position="99"/>
    </location>
</feature>
<feature type="zinc finger region" description="SIAH-type" evidence="4">
    <location>
        <begin position="116"/>
        <end position="176"/>
    </location>
</feature>
<feature type="region of interest" description="Disordered" evidence="5">
    <location>
        <begin position="1"/>
        <end position="44"/>
    </location>
</feature>
<feature type="region of interest" description="SBD">
    <location>
        <begin position="113"/>
        <end position="306"/>
    </location>
</feature>
<feature type="binding site" evidence="1">
    <location>
        <position position="121"/>
    </location>
    <ligand>
        <name>Zn(2+)</name>
        <dbReference type="ChEBI" id="CHEBI:29105"/>
        <label>1</label>
    </ligand>
</feature>
<feature type="binding site" evidence="1">
    <location>
        <position position="128"/>
    </location>
    <ligand>
        <name>Zn(2+)</name>
        <dbReference type="ChEBI" id="CHEBI:29105"/>
        <label>1</label>
    </ligand>
</feature>
<feature type="binding site" evidence="1">
    <location>
        <position position="140"/>
    </location>
    <ligand>
        <name>Zn(2+)</name>
        <dbReference type="ChEBI" id="CHEBI:29105"/>
        <label>1</label>
    </ligand>
</feature>
<feature type="binding site" evidence="1">
    <location>
        <position position="144"/>
    </location>
    <ligand>
        <name>Zn(2+)</name>
        <dbReference type="ChEBI" id="CHEBI:29105"/>
        <label>1</label>
    </ligand>
</feature>
<feature type="binding site" evidence="1">
    <location>
        <position position="151"/>
    </location>
    <ligand>
        <name>Zn(2+)</name>
        <dbReference type="ChEBI" id="CHEBI:29105"/>
        <label>2</label>
    </ligand>
</feature>
<feature type="binding site" evidence="1">
    <location>
        <position position="158"/>
    </location>
    <ligand>
        <name>Zn(2+)</name>
        <dbReference type="ChEBI" id="CHEBI:29105"/>
        <label>2</label>
    </ligand>
</feature>
<feature type="binding site" evidence="1">
    <location>
        <position position="170"/>
    </location>
    <ligand>
        <name>Zn(2+)</name>
        <dbReference type="ChEBI" id="CHEBI:29105"/>
        <label>2</label>
    </ligand>
</feature>
<feature type="binding site" evidence="1">
    <location>
        <position position="175"/>
    </location>
    <ligand>
        <name>Zn(2+)</name>
        <dbReference type="ChEBI" id="CHEBI:29105"/>
        <label>2</label>
    </ligand>
</feature>
<feature type="mutagenesis site" description="Loss of ubiquitin ligase activity." evidence="9">
    <original>H</original>
    <variation>Y</variation>
    <location>
        <position position="81"/>
    </location>
</feature>
<feature type="sequence conflict" description="In Ref. 4; AAM61286." evidence="11" ref="4">
    <original>V</original>
    <variation>F</variation>
    <location>
        <position position="228"/>
    </location>
</feature>
<proteinExistence type="evidence at protein level"/>
<sequence length="326" mass="36947">MDLDSMDCTSTMDVTDDEEIHQDRHSYASVSKHHHTNNNTTNVNAAASGLLPTTTSVHELLECPVCTNSMYPPIHQCHNGHTLCSTCKARVHNRCPTCRQELGDIRCLALEKVAESLELPCKHMSLGCPEIFPYYSKLKHETVCNFRPYSCPYAGSECSVTGDIPFLVAHLRDDHKVDMHSGCTFNHRYVKSNPREVENATWMLTVFHCFGQYFCLHFEAFQLGMAPVYMAFLRFMGDETEARNYNYSLEVGGYGRKLIWEGTPRSVRDSHRKVRDSHDGLIIQRNMALFFSGGDRKELKLRVTGRIWKEQQQSGEGGGACIPNLS</sequence>
<accession>Q84JL3</accession>
<accession>Q8LFQ3</accession>
<accession>Q9M359</accession>
<evidence type="ECO:0000250" key="1"/>
<evidence type="ECO:0000250" key="2">
    <source>
        <dbReference type="UniProtKB" id="Q8IUQ4"/>
    </source>
</evidence>
<evidence type="ECO:0000255" key="3">
    <source>
        <dbReference type="PROSITE-ProRule" id="PRU00175"/>
    </source>
</evidence>
<evidence type="ECO:0000255" key="4">
    <source>
        <dbReference type="PROSITE-ProRule" id="PRU00455"/>
    </source>
</evidence>
<evidence type="ECO:0000256" key="5">
    <source>
        <dbReference type="SAM" id="MobiDB-lite"/>
    </source>
</evidence>
<evidence type="ECO:0000269" key="6">
    <source>
    </source>
</evidence>
<evidence type="ECO:0000269" key="7">
    <source>
    </source>
</evidence>
<evidence type="ECO:0000269" key="8">
    <source>
    </source>
</evidence>
<evidence type="ECO:0000269" key="9">
    <source>
    </source>
</evidence>
<evidence type="ECO:0000303" key="10">
    <source>
    </source>
</evidence>
<evidence type="ECO:0000305" key="11"/>
<name>SINA3_ARATH</name>
<comment type="function">
    <text evidence="8 9">E3 ubiquitin-protein ligase that mediates ubiquitination and subsequent proteasomal degradation of target proteins (PubMed:32786047). E3 ubiquitin ligases accept ubiquitin from an E2 ubiquitin-conjugating enzyme in the form of a thioester and then directly transfers the ubiquitin to targeted substrates (PubMed:32786047). It probably triggers the ubiquitin-mediated degradation of different substrates (PubMed:32786047). Modulates directly the ubiquitination and proteasomal-dependent degradation of FREE1, a component of the ESCRT-I complex (PubMed:32753431, PubMed:32786047). Modulates directly the ubiquitination and proteasomal-dependent degradation of ELC/VPS23A, a component of the ESCRT-I complex (PubMed:32753431).</text>
</comment>
<comment type="catalytic activity">
    <reaction evidence="9">
        <text>S-ubiquitinyl-[E2 ubiquitin-conjugating enzyme]-L-cysteine + [acceptor protein]-L-lysine = [E2 ubiquitin-conjugating enzyme]-L-cysteine + N(6)-ubiquitinyl-[acceptor protein]-L-lysine.</text>
        <dbReference type="EC" id="2.3.2.27"/>
    </reaction>
</comment>
<comment type="pathway">
    <text evidence="11">Protein modification; protein ubiquitination.</text>
</comment>
<comment type="subunit">
    <text evidence="6 7 8 9">Interacts with SINAT6 (PubMed:24350984). Interacts with WAV3 (PubMed:22122664). Interacts with FREE1 (PubMed:32753431, PubMed:32786047). Interacts with ELC/VPS23A (PubMed:32753431).</text>
</comment>
<comment type="subcellular location">
    <subcellularLocation>
        <location evidence="8 9">Endosome</location>
        <location evidence="8 9">Multivesicular body</location>
    </subcellularLocation>
    <subcellularLocation>
        <location evidence="8">Cytoplasmic vesicle</location>
        <location evidence="8">Autophagosome</location>
    </subcellularLocation>
</comment>
<comment type="induction">
    <text evidence="7">Induced by drought stress, salt stress, osmotic shock and abscisic acid (ABA).</text>
</comment>
<comment type="domain">
    <text evidence="2">The RING-type zinc finger domain is essential for ubiquitin ligase activity.</text>
</comment>
<comment type="domain">
    <text evidence="2">The SBD domain (substrate-binding domain) mediates the homodimerization and the interaction with substrate proteins. It is related to the TRAF family.</text>
</comment>
<comment type="similarity">
    <text evidence="11">Belongs to the SINA (Seven in absentia) family.</text>
</comment>
<comment type="sequence caution" evidence="11">
    <conflict type="erroneous initiation">
        <sequence resource="EMBL-CDS" id="CAB71109"/>
    </conflict>
    <text>Truncated N-terminus.</text>
</comment>
<protein>
    <recommendedName>
        <fullName evidence="11">E3 ubiquitin-protein ligase SINAT3</fullName>
        <ecNumber evidence="9">2.3.2.27</ecNumber>
    </recommendedName>
    <alternativeName>
        <fullName evidence="11">RING-type E3 ubiquitin transferase SINAT3</fullName>
    </alternativeName>
    <alternativeName>
        <fullName evidence="11">Seven in absentia homolog 3</fullName>
    </alternativeName>
</protein>
<reference key="1">
    <citation type="journal article" date="2000" name="Nature">
        <title>Sequence and analysis of chromosome 3 of the plant Arabidopsis thaliana.</title>
        <authorList>
            <person name="Salanoubat M."/>
            <person name="Lemcke K."/>
            <person name="Rieger M."/>
            <person name="Ansorge W."/>
            <person name="Unseld M."/>
            <person name="Fartmann B."/>
            <person name="Valle G."/>
            <person name="Bloecker H."/>
            <person name="Perez-Alonso M."/>
            <person name="Obermaier B."/>
            <person name="Delseny M."/>
            <person name="Boutry M."/>
            <person name="Grivell L.A."/>
            <person name="Mache R."/>
            <person name="Puigdomenech P."/>
            <person name="De Simone V."/>
            <person name="Choisne N."/>
            <person name="Artiguenave F."/>
            <person name="Robert C."/>
            <person name="Brottier P."/>
            <person name="Wincker P."/>
            <person name="Cattolico L."/>
            <person name="Weissenbach J."/>
            <person name="Saurin W."/>
            <person name="Quetier F."/>
            <person name="Schaefer M."/>
            <person name="Mueller-Auer S."/>
            <person name="Gabel C."/>
            <person name="Fuchs M."/>
            <person name="Benes V."/>
            <person name="Wurmbach E."/>
            <person name="Drzonek H."/>
            <person name="Erfle H."/>
            <person name="Jordan N."/>
            <person name="Bangert S."/>
            <person name="Wiedelmann R."/>
            <person name="Kranz H."/>
            <person name="Voss H."/>
            <person name="Holland R."/>
            <person name="Brandt P."/>
            <person name="Nyakatura G."/>
            <person name="Vezzi A."/>
            <person name="D'Angelo M."/>
            <person name="Pallavicini A."/>
            <person name="Toppo S."/>
            <person name="Simionati B."/>
            <person name="Conrad A."/>
            <person name="Hornischer K."/>
            <person name="Kauer G."/>
            <person name="Loehnert T.-H."/>
            <person name="Nordsiek G."/>
            <person name="Reichelt J."/>
            <person name="Scharfe M."/>
            <person name="Schoen O."/>
            <person name="Bargues M."/>
            <person name="Terol J."/>
            <person name="Climent J."/>
            <person name="Navarro P."/>
            <person name="Collado C."/>
            <person name="Perez-Perez A."/>
            <person name="Ottenwaelder B."/>
            <person name="Duchemin D."/>
            <person name="Cooke R."/>
            <person name="Laudie M."/>
            <person name="Berger-Llauro C."/>
            <person name="Purnelle B."/>
            <person name="Masuy D."/>
            <person name="de Haan M."/>
            <person name="Maarse A.C."/>
            <person name="Alcaraz J.-P."/>
            <person name="Cottet A."/>
            <person name="Casacuberta E."/>
            <person name="Monfort A."/>
            <person name="Argiriou A."/>
            <person name="Flores M."/>
            <person name="Liguori R."/>
            <person name="Vitale D."/>
            <person name="Mannhaupt G."/>
            <person name="Haase D."/>
            <person name="Schoof H."/>
            <person name="Rudd S."/>
            <person name="Zaccaria P."/>
            <person name="Mewes H.-W."/>
            <person name="Mayer K.F.X."/>
            <person name="Kaul S."/>
            <person name="Town C.D."/>
            <person name="Koo H.L."/>
            <person name="Tallon L.J."/>
            <person name="Jenkins J."/>
            <person name="Rooney T."/>
            <person name="Rizzo M."/>
            <person name="Walts A."/>
            <person name="Utterback T."/>
            <person name="Fujii C.Y."/>
            <person name="Shea T.P."/>
            <person name="Creasy T.H."/>
            <person name="Haas B."/>
            <person name="Maiti R."/>
            <person name="Wu D."/>
            <person name="Peterson J."/>
            <person name="Van Aken S."/>
            <person name="Pai G."/>
            <person name="Militscher J."/>
            <person name="Sellers P."/>
            <person name="Gill J.E."/>
            <person name="Feldblyum T.V."/>
            <person name="Preuss D."/>
            <person name="Lin X."/>
            <person name="Nierman W.C."/>
            <person name="Salzberg S.L."/>
            <person name="White O."/>
            <person name="Venter J.C."/>
            <person name="Fraser C.M."/>
            <person name="Kaneko T."/>
            <person name="Nakamura Y."/>
            <person name="Sato S."/>
            <person name="Kato T."/>
            <person name="Asamizu E."/>
            <person name="Sasamoto S."/>
            <person name="Kimura T."/>
            <person name="Idesawa K."/>
            <person name="Kawashima K."/>
            <person name="Kishida Y."/>
            <person name="Kiyokawa C."/>
            <person name="Kohara M."/>
            <person name="Matsumoto M."/>
            <person name="Matsuno A."/>
            <person name="Muraki A."/>
            <person name="Nakayama S."/>
            <person name="Nakazaki N."/>
            <person name="Shinpo S."/>
            <person name="Takeuchi C."/>
            <person name="Wada T."/>
            <person name="Watanabe A."/>
            <person name="Yamada M."/>
            <person name="Yasuda M."/>
            <person name="Tabata S."/>
        </authorList>
    </citation>
    <scope>NUCLEOTIDE SEQUENCE [LARGE SCALE GENOMIC DNA]</scope>
    <source>
        <strain>cv. Columbia</strain>
    </source>
</reference>
<reference key="2">
    <citation type="journal article" date="2017" name="Plant J.">
        <title>Araport11: a complete reannotation of the Arabidopsis thaliana reference genome.</title>
        <authorList>
            <person name="Cheng C.Y."/>
            <person name="Krishnakumar V."/>
            <person name="Chan A.P."/>
            <person name="Thibaud-Nissen F."/>
            <person name="Schobel S."/>
            <person name="Town C.D."/>
        </authorList>
    </citation>
    <scope>GENOME REANNOTATION</scope>
    <source>
        <strain>cv. Columbia</strain>
    </source>
</reference>
<reference key="3">
    <citation type="journal article" date="2003" name="Science">
        <title>Empirical analysis of transcriptional activity in the Arabidopsis genome.</title>
        <authorList>
            <person name="Yamada K."/>
            <person name="Lim J."/>
            <person name="Dale J.M."/>
            <person name="Chen H."/>
            <person name="Shinn P."/>
            <person name="Palm C.J."/>
            <person name="Southwick A.M."/>
            <person name="Wu H.C."/>
            <person name="Kim C.J."/>
            <person name="Nguyen M."/>
            <person name="Pham P.K."/>
            <person name="Cheuk R.F."/>
            <person name="Karlin-Newmann G."/>
            <person name="Liu S.X."/>
            <person name="Lam B."/>
            <person name="Sakano H."/>
            <person name="Wu T."/>
            <person name="Yu G."/>
            <person name="Miranda M."/>
            <person name="Quach H.L."/>
            <person name="Tripp M."/>
            <person name="Chang C.H."/>
            <person name="Lee J.M."/>
            <person name="Toriumi M.J."/>
            <person name="Chan M.M."/>
            <person name="Tang C.C."/>
            <person name="Onodera C.S."/>
            <person name="Deng J.M."/>
            <person name="Akiyama K."/>
            <person name="Ansari Y."/>
            <person name="Arakawa T."/>
            <person name="Banh J."/>
            <person name="Banno F."/>
            <person name="Bowser L."/>
            <person name="Brooks S.Y."/>
            <person name="Carninci P."/>
            <person name="Chao Q."/>
            <person name="Choy N."/>
            <person name="Enju A."/>
            <person name="Goldsmith A.D."/>
            <person name="Gurjal M."/>
            <person name="Hansen N.F."/>
            <person name="Hayashizaki Y."/>
            <person name="Johnson-Hopson C."/>
            <person name="Hsuan V.W."/>
            <person name="Iida K."/>
            <person name="Karnes M."/>
            <person name="Khan S."/>
            <person name="Koesema E."/>
            <person name="Ishida J."/>
            <person name="Jiang P.X."/>
            <person name="Jones T."/>
            <person name="Kawai J."/>
            <person name="Kamiya A."/>
            <person name="Meyers C."/>
            <person name="Nakajima M."/>
            <person name="Narusaka M."/>
            <person name="Seki M."/>
            <person name="Sakurai T."/>
            <person name="Satou M."/>
            <person name="Tamse R."/>
            <person name="Vaysberg M."/>
            <person name="Wallender E.K."/>
            <person name="Wong C."/>
            <person name="Yamamura Y."/>
            <person name="Yuan S."/>
            <person name="Shinozaki K."/>
            <person name="Davis R.W."/>
            <person name="Theologis A."/>
            <person name="Ecker J.R."/>
        </authorList>
    </citation>
    <scope>NUCLEOTIDE SEQUENCE [LARGE SCALE MRNA]</scope>
    <source>
        <strain>cv. Columbia</strain>
    </source>
</reference>
<reference key="4">
    <citation type="submission" date="2002-03" db="EMBL/GenBank/DDBJ databases">
        <title>Full-length cDNA from Arabidopsis thaliana.</title>
        <authorList>
            <person name="Brover V.V."/>
            <person name="Troukhan M.E."/>
            <person name="Alexandrov N.A."/>
            <person name="Lu Y.-P."/>
            <person name="Flavell R.B."/>
            <person name="Feldmann K.A."/>
        </authorList>
    </citation>
    <scope>NUCLEOTIDE SEQUENCE [LARGE SCALE MRNA]</scope>
</reference>
<reference key="5">
    <citation type="journal article" date="2012" name="Plant J.">
        <title>The wavy growth 3 E3 ligase family controls the gravitropic response in Arabidopsis roots.</title>
        <authorList>
            <person name="Sakai T."/>
            <person name="Mochizuki S."/>
            <person name="Haga K."/>
            <person name="Uehara Y."/>
            <person name="Suzuki A."/>
            <person name="Harada A."/>
            <person name="Wada T."/>
            <person name="Ishiguro S."/>
            <person name="Okada K."/>
        </authorList>
    </citation>
    <scope>INTERACTION WITH WAV3</scope>
    <source>
        <strain>cv. Landsberg erecta</strain>
    </source>
</reference>
<reference key="6">
    <citation type="journal article" date="2014" name="New Phytol.">
        <title>The tumor necrosis factor receptor-associated factor (TRAF)-like family protein SEVEN IN ABSENTIA 2 (SINA2) promotes drought tolerance in an ABA-dependent manner in Arabidopsis.</title>
        <authorList>
            <person name="Bao Y."/>
            <person name="Wang C."/>
            <person name="Jiang C."/>
            <person name="Pan J."/>
            <person name="Zhang G."/>
            <person name="Liu H."/>
            <person name="Zhang H."/>
        </authorList>
    </citation>
    <scope>INTERACTION WITH SINAT6</scope>
    <scope>INDUCTION</scope>
</reference>
<reference key="7">
    <citation type="journal article" date="2020" name="J. Integr. Plant Biol.">
        <title>SINAT E3 ligases regulate the stability of the ESCRT component FREE1 in response to iron deficiency in plants.</title>
        <authorList>
            <person name="Xiao Z."/>
            <person name="Yang C."/>
            <person name="Liu C."/>
            <person name="Yang L."/>
            <person name="Yang S."/>
            <person name="Zhou J."/>
            <person name="Li F."/>
            <person name="Jiang L."/>
            <person name="Xiao S."/>
            <person name="Gao C."/>
            <person name="Shen W."/>
        </authorList>
    </citation>
    <scope>FUNCTION</scope>
    <scope>CATALYTIC ACTIVITY</scope>
    <scope>INTERACTION WITH FREE1</scope>
    <scope>SUBCELLULAR LOCATION</scope>
    <scope>MUTAGENESIS OF HIS-81</scope>
</reference>
<reference key="8">
    <citation type="journal article" date="2020" name="Plant Cell">
        <title>SINAT E3 ubiquitin ligases mediate FREE1 and VPS23A degradation to modulate abscisic acid signaling.</title>
        <authorList>
            <person name="Xia F.N."/>
            <person name="Zeng B."/>
            <person name="Liu H.S."/>
            <person name="Qi H."/>
            <person name="Xie L.J."/>
            <person name="Yu L.J."/>
            <person name="Chen Q.F."/>
            <person name="Li J.F."/>
            <person name="Chen Y.Q."/>
            <person name="Jiang L."/>
            <person name="Xiao S."/>
        </authorList>
    </citation>
    <scope>FUNCTION</scope>
    <scope>INTERACTION WITH FREE1 AND ELC/VPS23A</scope>
    <scope>SUBCELLULAR LOCATION</scope>
</reference>
<keyword id="KW-0968">Cytoplasmic vesicle</keyword>
<keyword id="KW-0967">Endosome</keyword>
<keyword id="KW-0479">Metal-binding</keyword>
<keyword id="KW-1185">Reference proteome</keyword>
<keyword id="KW-0808">Transferase</keyword>
<keyword id="KW-0833">Ubl conjugation pathway</keyword>
<keyword id="KW-0862">Zinc</keyword>
<keyword id="KW-0863">Zinc-finger</keyword>
<gene>
    <name evidence="10" type="primary">SINAT3</name>
    <name type="ordered locus">At3g61790</name>
    <name type="ORF">F15G16.180</name>
</gene>
<dbReference type="EC" id="2.3.2.27" evidence="9"/>
<dbReference type="EMBL" id="AL132959">
    <property type="protein sequence ID" value="CAB71109.1"/>
    <property type="status" value="ALT_INIT"/>
    <property type="molecule type" value="Genomic_DNA"/>
</dbReference>
<dbReference type="EMBL" id="CP002686">
    <property type="protein sequence ID" value="AEE80257.1"/>
    <property type="molecule type" value="Genomic_DNA"/>
</dbReference>
<dbReference type="EMBL" id="BT003967">
    <property type="protein sequence ID" value="AAO42011.1"/>
    <property type="molecule type" value="mRNA"/>
</dbReference>
<dbReference type="EMBL" id="BT005079">
    <property type="protein sequence ID" value="AAO50612.1"/>
    <property type="molecule type" value="mRNA"/>
</dbReference>
<dbReference type="EMBL" id="AY084712">
    <property type="protein sequence ID" value="AAM61286.1"/>
    <property type="molecule type" value="mRNA"/>
</dbReference>
<dbReference type="PIR" id="T47971">
    <property type="entry name" value="T47971"/>
</dbReference>
<dbReference type="RefSeq" id="NP_567118.1">
    <property type="nucleotide sequence ID" value="NM_116044.4"/>
</dbReference>
<dbReference type="SMR" id="Q84JL3"/>
<dbReference type="BioGRID" id="10666">
    <property type="interactions" value="24"/>
</dbReference>
<dbReference type="FunCoup" id="Q84JL3">
    <property type="interactions" value="1883"/>
</dbReference>
<dbReference type="IntAct" id="Q84JL3">
    <property type="interactions" value="18"/>
</dbReference>
<dbReference type="STRING" id="3702.Q84JL3"/>
<dbReference type="PaxDb" id="3702-AT3G61790.1"/>
<dbReference type="ProteomicsDB" id="234584"/>
<dbReference type="EnsemblPlants" id="AT3G61790.1">
    <property type="protein sequence ID" value="AT3G61790.1"/>
    <property type="gene ID" value="AT3G61790"/>
</dbReference>
<dbReference type="GeneID" id="825352"/>
<dbReference type="Gramene" id="AT3G61790.1">
    <property type="protein sequence ID" value="AT3G61790.1"/>
    <property type="gene ID" value="AT3G61790"/>
</dbReference>
<dbReference type="KEGG" id="ath:AT3G61790"/>
<dbReference type="Araport" id="AT3G61790"/>
<dbReference type="TAIR" id="AT3G61790">
    <property type="gene designation" value="SINAT3"/>
</dbReference>
<dbReference type="eggNOG" id="KOG3002">
    <property type="taxonomic scope" value="Eukaryota"/>
</dbReference>
<dbReference type="HOGENOM" id="CLU_028215_1_1_1"/>
<dbReference type="InParanoid" id="Q84JL3"/>
<dbReference type="OMA" id="HESACNF"/>
<dbReference type="OrthoDB" id="941555at2759"/>
<dbReference type="PhylomeDB" id="Q84JL3"/>
<dbReference type="UniPathway" id="UPA00143"/>
<dbReference type="PRO" id="PR:Q84JL3"/>
<dbReference type="Proteomes" id="UP000006548">
    <property type="component" value="Chromosome 3"/>
</dbReference>
<dbReference type="ExpressionAtlas" id="Q84JL3">
    <property type="expression patterns" value="baseline and differential"/>
</dbReference>
<dbReference type="GO" id="GO:0005776">
    <property type="term" value="C:autophagosome"/>
    <property type="evidence" value="ECO:0007669"/>
    <property type="project" value="UniProtKB-SubCell"/>
</dbReference>
<dbReference type="GO" id="GO:0012505">
    <property type="term" value="C:endomembrane system"/>
    <property type="evidence" value="ECO:0000314"/>
    <property type="project" value="TAIR"/>
</dbReference>
<dbReference type="GO" id="GO:0005771">
    <property type="term" value="C:multivesicular body"/>
    <property type="evidence" value="ECO:0007669"/>
    <property type="project" value="UniProtKB-SubCell"/>
</dbReference>
<dbReference type="GO" id="GO:0016740">
    <property type="term" value="F:transferase activity"/>
    <property type="evidence" value="ECO:0007669"/>
    <property type="project" value="UniProtKB-KW"/>
</dbReference>
<dbReference type="GO" id="GO:0008270">
    <property type="term" value="F:zinc ion binding"/>
    <property type="evidence" value="ECO:0007669"/>
    <property type="project" value="UniProtKB-KW"/>
</dbReference>
<dbReference type="GO" id="GO:0016567">
    <property type="term" value="P:protein ubiquitination"/>
    <property type="evidence" value="ECO:0007669"/>
    <property type="project" value="UniProtKB-UniPathway"/>
</dbReference>
<dbReference type="GO" id="GO:0006511">
    <property type="term" value="P:ubiquitin-dependent protein catabolic process"/>
    <property type="evidence" value="ECO:0007669"/>
    <property type="project" value="InterPro"/>
</dbReference>
<dbReference type="CDD" id="cd16571">
    <property type="entry name" value="RING-HC_SIAHs"/>
    <property type="match status" value="1"/>
</dbReference>
<dbReference type="CDD" id="cd03829">
    <property type="entry name" value="Sina"/>
    <property type="match status" value="1"/>
</dbReference>
<dbReference type="FunFam" id="3.30.40.10:FF:000041">
    <property type="entry name" value="E3 ubiquitin-protein ligase SINAT3"/>
    <property type="match status" value="1"/>
</dbReference>
<dbReference type="FunFam" id="3.30.40.10:FF:000483">
    <property type="entry name" value="E3 ubiquitin-protein ligase SINAT3"/>
    <property type="match status" value="1"/>
</dbReference>
<dbReference type="FunFam" id="2.60.210.10:FF:000004">
    <property type="entry name" value="E3 ubiquitin-protein ligase SINAT5-like"/>
    <property type="match status" value="1"/>
</dbReference>
<dbReference type="Gene3D" id="2.60.210.10">
    <property type="entry name" value="Apoptosis, Tumor Necrosis Factor Receptor Associated Protein 2, Chain A"/>
    <property type="match status" value="1"/>
</dbReference>
<dbReference type="Gene3D" id="3.30.40.10">
    <property type="entry name" value="Zinc/RING finger domain, C3HC4 (zinc finger)"/>
    <property type="match status" value="2"/>
</dbReference>
<dbReference type="InterPro" id="IPR018121">
    <property type="entry name" value="7-in-absentia-prot_TRAF-dom"/>
</dbReference>
<dbReference type="InterPro" id="IPR052088">
    <property type="entry name" value="E3_ubiquitin-ligase_SINA"/>
</dbReference>
<dbReference type="InterPro" id="IPR049548">
    <property type="entry name" value="Sina-like_RING"/>
</dbReference>
<dbReference type="InterPro" id="IPR008974">
    <property type="entry name" value="TRAF-like"/>
</dbReference>
<dbReference type="InterPro" id="IPR001841">
    <property type="entry name" value="Znf_RING"/>
</dbReference>
<dbReference type="InterPro" id="IPR013083">
    <property type="entry name" value="Znf_RING/FYVE/PHD"/>
</dbReference>
<dbReference type="InterPro" id="IPR013010">
    <property type="entry name" value="Znf_SIAH"/>
</dbReference>
<dbReference type="PANTHER" id="PTHR10315">
    <property type="entry name" value="E3 UBIQUITIN PROTEIN LIGASE SIAH"/>
    <property type="match status" value="1"/>
</dbReference>
<dbReference type="PANTHER" id="PTHR10315:SF80">
    <property type="entry name" value="E3 UBIQUITIN-PROTEIN LIGASE SINAT3"/>
    <property type="match status" value="1"/>
</dbReference>
<dbReference type="Pfam" id="PF21362">
    <property type="entry name" value="Sina_RING"/>
    <property type="match status" value="1"/>
</dbReference>
<dbReference type="Pfam" id="PF03145">
    <property type="entry name" value="Sina_TRAF"/>
    <property type="match status" value="1"/>
</dbReference>
<dbReference type="Pfam" id="PF21361">
    <property type="entry name" value="Sina_ZnF"/>
    <property type="match status" value="1"/>
</dbReference>
<dbReference type="SUPFAM" id="SSF57850">
    <property type="entry name" value="RING/U-box"/>
    <property type="match status" value="1"/>
</dbReference>
<dbReference type="SUPFAM" id="SSF49599">
    <property type="entry name" value="TRAF domain-like"/>
    <property type="match status" value="1"/>
</dbReference>
<dbReference type="PROSITE" id="PS50089">
    <property type="entry name" value="ZF_RING_2"/>
    <property type="match status" value="1"/>
</dbReference>
<dbReference type="PROSITE" id="PS51081">
    <property type="entry name" value="ZF_SIAH"/>
    <property type="match status" value="1"/>
</dbReference>
<organism>
    <name type="scientific">Arabidopsis thaliana</name>
    <name type="common">Mouse-ear cress</name>
    <dbReference type="NCBI Taxonomy" id="3702"/>
    <lineage>
        <taxon>Eukaryota</taxon>
        <taxon>Viridiplantae</taxon>
        <taxon>Streptophyta</taxon>
        <taxon>Embryophyta</taxon>
        <taxon>Tracheophyta</taxon>
        <taxon>Spermatophyta</taxon>
        <taxon>Magnoliopsida</taxon>
        <taxon>eudicotyledons</taxon>
        <taxon>Gunneridae</taxon>
        <taxon>Pentapetalae</taxon>
        <taxon>rosids</taxon>
        <taxon>malvids</taxon>
        <taxon>Brassicales</taxon>
        <taxon>Brassicaceae</taxon>
        <taxon>Camelineae</taxon>
        <taxon>Arabidopsis</taxon>
    </lineage>
</organism>